<proteinExistence type="inferred from homology"/>
<sequence>MTGPDEIAELVASLTREVADFPEPGVQFKDLTPLFADADGLSRVTDALAQAASGATLIAGIDARGFLLGAAVAIRLGVGVLAVRKAGKLPPPVHAQTYQLEYGTAALEIPADGVELAGRRVAIVDDVLATGGTLAATARLLTTAGADVISAGVVLELSDLGGRAAVAPLPLTALRAI</sequence>
<organism>
    <name type="scientific">Mycobacteroides abscessus (strain ATCC 19977 / DSM 44196 / CCUG 20993 / CIP 104536 / JCM 13569 / NCTC 13031 / TMC 1543 / L948)</name>
    <name type="common">Mycobacterium abscessus</name>
    <dbReference type="NCBI Taxonomy" id="561007"/>
    <lineage>
        <taxon>Bacteria</taxon>
        <taxon>Bacillati</taxon>
        <taxon>Actinomycetota</taxon>
        <taxon>Actinomycetes</taxon>
        <taxon>Mycobacteriales</taxon>
        <taxon>Mycobacteriaceae</taxon>
        <taxon>Mycobacteroides</taxon>
        <taxon>Mycobacteroides abscessus</taxon>
    </lineage>
</organism>
<name>APT_MYCA9</name>
<protein>
    <recommendedName>
        <fullName evidence="1">Adenine phosphoribosyltransferase</fullName>
        <shortName evidence="1">APRT</shortName>
        <ecNumber evidence="1">2.4.2.7</ecNumber>
    </recommendedName>
</protein>
<gene>
    <name evidence="1" type="primary">apt</name>
    <name type="ordered locus">MAB_2877c</name>
</gene>
<accession>B1MCI5</accession>
<comment type="function">
    <text evidence="1">Catalyzes a salvage reaction resulting in the formation of AMP, that is energically less costly than de novo synthesis.</text>
</comment>
<comment type="catalytic activity">
    <reaction evidence="1">
        <text>AMP + diphosphate = 5-phospho-alpha-D-ribose 1-diphosphate + adenine</text>
        <dbReference type="Rhea" id="RHEA:16609"/>
        <dbReference type="ChEBI" id="CHEBI:16708"/>
        <dbReference type="ChEBI" id="CHEBI:33019"/>
        <dbReference type="ChEBI" id="CHEBI:58017"/>
        <dbReference type="ChEBI" id="CHEBI:456215"/>
        <dbReference type="EC" id="2.4.2.7"/>
    </reaction>
</comment>
<comment type="pathway">
    <text evidence="1">Purine metabolism; AMP biosynthesis via salvage pathway; AMP from adenine: step 1/1.</text>
</comment>
<comment type="subunit">
    <text evidence="1">Homodimer.</text>
</comment>
<comment type="subcellular location">
    <subcellularLocation>
        <location evidence="1">Cytoplasm</location>
    </subcellularLocation>
</comment>
<comment type="similarity">
    <text evidence="1">Belongs to the purine/pyrimidine phosphoribosyltransferase family.</text>
</comment>
<feature type="chain" id="PRO_1000116251" description="Adenine phosphoribosyltransferase">
    <location>
        <begin position="1"/>
        <end position="177"/>
    </location>
</feature>
<reference key="1">
    <citation type="journal article" date="2009" name="PLoS ONE">
        <title>Non mycobacterial virulence genes in the genome of the emerging pathogen Mycobacterium abscessus.</title>
        <authorList>
            <person name="Ripoll F."/>
            <person name="Pasek S."/>
            <person name="Schenowitz C."/>
            <person name="Dossat C."/>
            <person name="Barbe V."/>
            <person name="Rottman M."/>
            <person name="Macheras E."/>
            <person name="Heym B."/>
            <person name="Herrmann J.L."/>
            <person name="Daffe M."/>
            <person name="Brosch R."/>
            <person name="Risler J.L."/>
            <person name="Gaillard J.L."/>
        </authorList>
    </citation>
    <scope>NUCLEOTIDE SEQUENCE [LARGE SCALE GENOMIC DNA]</scope>
    <source>
        <strain>ATCC 19977 / DSM 44196 / CCUG 20993 / CIP 104536 / JCM 13569 / NCTC 13031 / TMC 1543 / L948</strain>
    </source>
</reference>
<keyword id="KW-0963">Cytoplasm</keyword>
<keyword id="KW-0328">Glycosyltransferase</keyword>
<keyword id="KW-0660">Purine salvage</keyword>
<keyword id="KW-1185">Reference proteome</keyword>
<keyword id="KW-0808">Transferase</keyword>
<dbReference type="EC" id="2.4.2.7" evidence="1"/>
<dbReference type="EMBL" id="CU458896">
    <property type="protein sequence ID" value="CAM62956.1"/>
    <property type="molecule type" value="Genomic_DNA"/>
</dbReference>
<dbReference type="RefSeq" id="WP_005082386.1">
    <property type="nucleotide sequence ID" value="NZ_MLCG01000003.1"/>
</dbReference>
<dbReference type="SMR" id="B1MCI5"/>
<dbReference type="GeneID" id="93379808"/>
<dbReference type="KEGG" id="mab:MAB_2877c"/>
<dbReference type="UniPathway" id="UPA00588">
    <property type="reaction ID" value="UER00646"/>
</dbReference>
<dbReference type="Proteomes" id="UP000007137">
    <property type="component" value="Chromosome"/>
</dbReference>
<dbReference type="GO" id="GO:0005737">
    <property type="term" value="C:cytoplasm"/>
    <property type="evidence" value="ECO:0007669"/>
    <property type="project" value="UniProtKB-SubCell"/>
</dbReference>
<dbReference type="GO" id="GO:0002055">
    <property type="term" value="F:adenine binding"/>
    <property type="evidence" value="ECO:0007669"/>
    <property type="project" value="TreeGrafter"/>
</dbReference>
<dbReference type="GO" id="GO:0003999">
    <property type="term" value="F:adenine phosphoribosyltransferase activity"/>
    <property type="evidence" value="ECO:0007669"/>
    <property type="project" value="UniProtKB-UniRule"/>
</dbReference>
<dbReference type="GO" id="GO:0016208">
    <property type="term" value="F:AMP binding"/>
    <property type="evidence" value="ECO:0007669"/>
    <property type="project" value="TreeGrafter"/>
</dbReference>
<dbReference type="GO" id="GO:0006168">
    <property type="term" value="P:adenine salvage"/>
    <property type="evidence" value="ECO:0007669"/>
    <property type="project" value="InterPro"/>
</dbReference>
<dbReference type="GO" id="GO:0044209">
    <property type="term" value="P:AMP salvage"/>
    <property type="evidence" value="ECO:0007669"/>
    <property type="project" value="UniProtKB-UniRule"/>
</dbReference>
<dbReference type="GO" id="GO:0006166">
    <property type="term" value="P:purine ribonucleoside salvage"/>
    <property type="evidence" value="ECO:0007669"/>
    <property type="project" value="UniProtKB-KW"/>
</dbReference>
<dbReference type="CDD" id="cd06223">
    <property type="entry name" value="PRTases_typeI"/>
    <property type="match status" value="1"/>
</dbReference>
<dbReference type="FunFam" id="3.40.50.2020:FF:000021">
    <property type="entry name" value="Adenine phosphoribosyltransferase"/>
    <property type="match status" value="1"/>
</dbReference>
<dbReference type="Gene3D" id="3.40.50.2020">
    <property type="match status" value="1"/>
</dbReference>
<dbReference type="HAMAP" id="MF_00004">
    <property type="entry name" value="Aden_phosphoribosyltr"/>
    <property type="match status" value="1"/>
</dbReference>
<dbReference type="InterPro" id="IPR005764">
    <property type="entry name" value="Ade_phspho_trans"/>
</dbReference>
<dbReference type="InterPro" id="IPR000836">
    <property type="entry name" value="PRibTrfase_dom"/>
</dbReference>
<dbReference type="InterPro" id="IPR029057">
    <property type="entry name" value="PRTase-like"/>
</dbReference>
<dbReference type="InterPro" id="IPR050054">
    <property type="entry name" value="UPRTase/APRTase"/>
</dbReference>
<dbReference type="NCBIfam" id="NF002636">
    <property type="entry name" value="PRK02304.1-5"/>
    <property type="match status" value="1"/>
</dbReference>
<dbReference type="PANTHER" id="PTHR32315">
    <property type="entry name" value="ADENINE PHOSPHORIBOSYLTRANSFERASE"/>
    <property type="match status" value="1"/>
</dbReference>
<dbReference type="PANTHER" id="PTHR32315:SF3">
    <property type="entry name" value="ADENINE PHOSPHORIBOSYLTRANSFERASE"/>
    <property type="match status" value="1"/>
</dbReference>
<dbReference type="Pfam" id="PF00156">
    <property type="entry name" value="Pribosyltran"/>
    <property type="match status" value="1"/>
</dbReference>
<dbReference type="SUPFAM" id="SSF53271">
    <property type="entry name" value="PRTase-like"/>
    <property type="match status" value="1"/>
</dbReference>
<evidence type="ECO:0000255" key="1">
    <source>
        <dbReference type="HAMAP-Rule" id="MF_00004"/>
    </source>
</evidence>